<proteinExistence type="inferred from homology"/>
<accession>B3QWI0</accession>
<keyword id="KW-0149">Chlorophyll biosynthesis</keyword>
<keyword id="KW-0521">NADP</keyword>
<keyword id="KW-0560">Oxidoreductase</keyword>
<keyword id="KW-0627">Porphyrin biosynthesis</keyword>
<keyword id="KW-1185">Reference proteome</keyword>
<reference key="1">
    <citation type="submission" date="2008-06" db="EMBL/GenBank/DDBJ databases">
        <title>Complete sequence of Chloroherpeton thalassium ATCC 35110.</title>
        <authorList>
            <consortium name="US DOE Joint Genome Institute"/>
            <person name="Lucas S."/>
            <person name="Copeland A."/>
            <person name="Lapidus A."/>
            <person name="Glavina del Rio T."/>
            <person name="Dalin E."/>
            <person name="Tice H."/>
            <person name="Bruce D."/>
            <person name="Goodwin L."/>
            <person name="Pitluck S."/>
            <person name="Schmutz J."/>
            <person name="Larimer F."/>
            <person name="Land M."/>
            <person name="Hauser L."/>
            <person name="Kyrpides N."/>
            <person name="Mikhailova N."/>
            <person name="Liu Z."/>
            <person name="Li T."/>
            <person name="Zhao F."/>
            <person name="Overmann J."/>
            <person name="Bryant D.A."/>
            <person name="Richardson P."/>
        </authorList>
    </citation>
    <scope>NUCLEOTIDE SEQUENCE [LARGE SCALE GENOMIC DNA]</scope>
    <source>
        <strain>ATCC 35110 / GB-78</strain>
    </source>
</reference>
<organism>
    <name type="scientific">Chloroherpeton thalassium (strain ATCC 35110 / GB-78)</name>
    <dbReference type="NCBI Taxonomy" id="517418"/>
    <lineage>
        <taxon>Bacteria</taxon>
        <taxon>Pseudomonadati</taxon>
        <taxon>Chlorobiota</taxon>
        <taxon>Chlorobiia</taxon>
        <taxon>Chlorobiales</taxon>
        <taxon>Chloroherpetonaceae</taxon>
        <taxon>Chloroherpeton</taxon>
    </lineage>
</organism>
<feature type="chain" id="PRO_1000093125" description="Glutamyl-tRNA reductase">
    <location>
        <begin position="1"/>
        <end position="437"/>
    </location>
</feature>
<feature type="active site" description="Nucleophile" evidence="1">
    <location>
        <position position="50"/>
    </location>
</feature>
<feature type="binding site" evidence="1">
    <location>
        <begin position="49"/>
        <end position="52"/>
    </location>
    <ligand>
        <name>substrate</name>
    </ligand>
</feature>
<feature type="binding site" evidence="1">
    <location>
        <position position="109"/>
    </location>
    <ligand>
        <name>substrate</name>
    </ligand>
</feature>
<feature type="binding site" evidence="1">
    <location>
        <begin position="114"/>
        <end position="116"/>
    </location>
    <ligand>
        <name>substrate</name>
    </ligand>
</feature>
<feature type="binding site" evidence="1">
    <location>
        <position position="120"/>
    </location>
    <ligand>
        <name>substrate</name>
    </ligand>
</feature>
<feature type="binding site" evidence="1">
    <location>
        <begin position="189"/>
        <end position="194"/>
    </location>
    <ligand>
        <name>NADP(+)</name>
        <dbReference type="ChEBI" id="CHEBI:58349"/>
    </ligand>
</feature>
<feature type="site" description="Important for activity" evidence="1">
    <location>
        <position position="99"/>
    </location>
</feature>
<protein>
    <recommendedName>
        <fullName evidence="1">Glutamyl-tRNA reductase</fullName>
        <shortName evidence="1">GluTR</shortName>
        <ecNumber evidence="1">1.2.1.70</ecNumber>
    </recommendedName>
</protein>
<sequence length="437" mass="49497">MNLIAVGVNHNTAPIELREKISLTDSMARSLLTELIDSKLASEALVLSTCNRTELYVVPAMPEVTANYLKDYLIAHKGVRKEVTRDHFFNYFACGAARHFYNVACAIDSLILGEVQIIGQVKTAYNRAVEMKTVGPILNKMCHTGFGLANRVRSKTKLTAGAVSVSYAAVELTQKIYSDVSTKNILLVGAGDTAKLAAKNLLDKRVRDFYITNRTYEKAELLAQELGTGKILPLEEMTERLHEFDIVVTAVGGNDHIIKKEHVAAAMQKRHRDPILILDLGLPRNVAPEVGQVNNVFLKDIDDLKMIIDSNLEKRRAEIPKVKHFIQKELIEYARWYFSLEVKPTIVDLQEKFFEIKALELARIKNKVSAEEYERMEQLSDRIIKKLLHFPITTLKQQTADTTDPVSFIRNIFDLKEQEEEFPGLTFPINLKEQNNN</sequence>
<gene>
    <name evidence="1" type="primary">hemA</name>
    <name type="ordered locus">Ctha_2289</name>
</gene>
<dbReference type="EC" id="1.2.1.70" evidence="1"/>
<dbReference type="EMBL" id="CP001100">
    <property type="protein sequence ID" value="ACF14740.1"/>
    <property type="molecule type" value="Genomic_DNA"/>
</dbReference>
<dbReference type="RefSeq" id="WP_012500823.1">
    <property type="nucleotide sequence ID" value="NC_011026.1"/>
</dbReference>
<dbReference type="SMR" id="B3QWI0"/>
<dbReference type="STRING" id="517418.Ctha_2289"/>
<dbReference type="KEGG" id="cts:Ctha_2289"/>
<dbReference type="eggNOG" id="COG0373">
    <property type="taxonomic scope" value="Bacteria"/>
</dbReference>
<dbReference type="HOGENOM" id="CLU_035113_2_2_10"/>
<dbReference type="OrthoDB" id="110209at2"/>
<dbReference type="UniPathway" id="UPA00251">
    <property type="reaction ID" value="UER00316"/>
</dbReference>
<dbReference type="UniPathway" id="UPA00668"/>
<dbReference type="Proteomes" id="UP000001208">
    <property type="component" value="Chromosome"/>
</dbReference>
<dbReference type="GO" id="GO:0008883">
    <property type="term" value="F:glutamyl-tRNA reductase activity"/>
    <property type="evidence" value="ECO:0007669"/>
    <property type="project" value="UniProtKB-UniRule"/>
</dbReference>
<dbReference type="GO" id="GO:0050661">
    <property type="term" value="F:NADP binding"/>
    <property type="evidence" value="ECO:0007669"/>
    <property type="project" value="InterPro"/>
</dbReference>
<dbReference type="GO" id="GO:0015995">
    <property type="term" value="P:chlorophyll biosynthetic process"/>
    <property type="evidence" value="ECO:0007669"/>
    <property type="project" value="UniProtKB-UniRule"/>
</dbReference>
<dbReference type="GO" id="GO:0019353">
    <property type="term" value="P:protoporphyrinogen IX biosynthetic process from glutamate"/>
    <property type="evidence" value="ECO:0007669"/>
    <property type="project" value="TreeGrafter"/>
</dbReference>
<dbReference type="CDD" id="cd05213">
    <property type="entry name" value="NAD_bind_Glutamyl_tRNA_reduct"/>
    <property type="match status" value="1"/>
</dbReference>
<dbReference type="FunFam" id="3.30.460.30:FF:000001">
    <property type="entry name" value="Glutamyl-tRNA reductase"/>
    <property type="match status" value="1"/>
</dbReference>
<dbReference type="FunFam" id="3.40.50.720:FF:000031">
    <property type="entry name" value="Glutamyl-tRNA reductase"/>
    <property type="match status" value="1"/>
</dbReference>
<dbReference type="Gene3D" id="3.30.460.30">
    <property type="entry name" value="Glutamyl-tRNA reductase, N-terminal domain"/>
    <property type="match status" value="1"/>
</dbReference>
<dbReference type="Gene3D" id="3.40.50.720">
    <property type="entry name" value="NAD(P)-binding Rossmann-like Domain"/>
    <property type="match status" value="1"/>
</dbReference>
<dbReference type="HAMAP" id="MF_00087">
    <property type="entry name" value="Glu_tRNA_reductase"/>
    <property type="match status" value="1"/>
</dbReference>
<dbReference type="InterPro" id="IPR000343">
    <property type="entry name" value="4pyrrol_synth_GluRdtase"/>
</dbReference>
<dbReference type="InterPro" id="IPR015896">
    <property type="entry name" value="4pyrrol_synth_GluRdtase_dimer"/>
</dbReference>
<dbReference type="InterPro" id="IPR015895">
    <property type="entry name" value="4pyrrol_synth_GluRdtase_N"/>
</dbReference>
<dbReference type="InterPro" id="IPR018214">
    <property type="entry name" value="GluRdtase_CS"/>
</dbReference>
<dbReference type="InterPro" id="IPR036453">
    <property type="entry name" value="GluRdtase_dimer_dom_sf"/>
</dbReference>
<dbReference type="InterPro" id="IPR036343">
    <property type="entry name" value="GluRdtase_N_sf"/>
</dbReference>
<dbReference type="InterPro" id="IPR036291">
    <property type="entry name" value="NAD(P)-bd_dom_sf"/>
</dbReference>
<dbReference type="InterPro" id="IPR006151">
    <property type="entry name" value="Shikm_DH/Glu-tRNA_Rdtase"/>
</dbReference>
<dbReference type="NCBIfam" id="TIGR01035">
    <property type="entry name" value="hemA"/>
    <property type="match status" value="1"/>
</dbReference>
<dbReference type="PANTHER" id="PTHR43013">
    <property type="entry name" value="GLUTAMYL-TRNA REDUCTASE"/>
    <property type="match status" value="1"/>
</dbReference>
<dbReference type="PANTHER" id="PTHR43013:SF1">
    <property type="entry name" value="GLUTAMYL-TRNA REDUCTASE"/>
    <property type="match status" value="1"/>
</dbReference>
<dbReference type="Pfam" id="PF00745">
    <property type="entry name" value="GlutR_dimer"/>
    <property type="match status" value="1"/>
</dbReference>
<dbReference type="Pfam" id="PF05201">
    <property type="entry name" value="GlutR_N"/>
    <property type="match status" value="1"/>
</dbReference>
<dbReference type="Pfam" id="PF01488">
    <property type="entry name" value="Shikimate_DH"/>
    <property type="match status" value="1"/>
</dbReference>
<dbReference type="PIRSF" id="PIRSF000445">
    <property type="entry name" value="4pyrrol_synth_GluRdtase"/>
    <property type="match status" value="1"/>
</dbReference>
<dbReference type="SUPFAM" id="SSF69742">
    <property type="entry name" value="Glutamyl tRNA-reductase catalytic, N-terminal domain"/>
    <property type="match status" value="1"/>
</dbReference>
<dbReference type="SUPFAM" id="SSF69075">
    <property type="entry name" value="Glutamyl tRNA-reductase dimerization domain"/>
    <property type="match status" value="1"/>
</dbReference>
<dbReference type="SUPFAM" id="SSF51735">
    <property type="entry name" value="NAD(P)-binding Rossmann-fold domains"/>
    <property type="match status" value="1"/>
</dbReference>
<dbReference type="PROSITE" id="PS00747">
    <property type="entry name" value="GLUTR"/>
    <property type="match status" value="1"/>
</dbReference>
<name>HEM1_CHLT3</name>
<comment type="function">
    <text evidence="1">Catalyzes the NADPH-dependent reduction of glutamyl-tRNA(Glu) to glutamate 1-semialdehyde (GSA).</text>
</comment>
<comment type="catalytic activity">
    <reaction evidence="1">
        <text>(S)-4-amino-5-oxopentanoate + tRNA(Glu) + NADP(+) = L-glutamyl-tRNA(Glu) + NADPH + H(+)</text>
        <dbReference type="Rhea" id="RHEA:12344"/>
        <dbReference type="Rhea" id="RHEA-COMP:9663"/>
        <dbReference type="Rhea" id="RHEA-COMP:9680"/>
        <dbReference type="ChEBI" id="CHEBI:15378"/>
        <dbReference type="ChEBI" id="CHEBI:57501"/>
        <dbReference type="ChEBI" id="CHEBI:57783"/>
        <dbReference type="ChEBI" id="CHEBI:58349"/>
        <dbReference type="ChEBI" id="CHEBI:78442"/>
        <dbReference type="ChEBI" id="CHEBI:78520"/>
        <dbReference type="EC" id="1.2.1.70"/>
    </reaction>
</comment>
<comment type="pathway">
    <text evidence="1">Porphyrin-containing compound metabolism; protoporphyrin-IX biosynthesis; 5-aminolevulinate from L-glutamyl-tRNA(Glu): step 1/2.</text>
</comment>
<comment type="pathway">
    <text evidence="1">Porphyrin-containing compound metabolism; chlorophyll biosynthesis.</text>
</comment>
<comment type="subunit">
    <text evidence="1">Homodimer.</text>
</comment>
<comment type="domain">
    <text evidence="1">Possesses an unusual extended V-shaped dimeric structure with each monomer consisting of three distinct domains arranged along a curved 'spinal' alpha-helix. The N-terminal catalytic domain specifically recognizes the glutamate moiety of the substrate. The second domain is the NADPH-binding domain, and the third C-terminal domain is responsible for dimerization.</text>
</comment>
<comment type="miscellaneous">
    <text evidence="1">During catalysis, the active site Cys acts as a nucleophile attacking the alpha-carbonyl group of tRNA-bound glutamate with the formation of a thioester intermediate between enzyme and glutamate, and the concomitant release of tRNA(Glu). The thioester intermediate is finally reduced by direct hydride transfer from NADPH, to form the product GSA.</text>
</comment>
<comment type="similarity">
    <text evidence="1">Belongs to the glutamyl-tRNA reductase family.</text>
</comment>
<evidence type="ECO:0000255" key="1">
    <source>
        <dbReference type="HAMAP-Rule" id="MF_00087"/>
    </source>
</evidence>